<keyword id="KW-0378">Hydrolase</keyword>
<keyword id="KW-0460">Magnesium</keyword>
<keyword id="KW-0479">Metal-binding</keyword>
<keyword id="KW-1185">Reference proteome</keyword>
<accession>P65553</accession>
<accession>Q8X7N1</accession>
<feature type="chain" id="PRO_0000056987" description="GDP-mannose mannosyl hydrolase">
    <location>
        <begin position="1"/>
        <end position="159"/>
    </location>
</feature>
<feature type="domain" description="Nudix hydrolase" evidence="1">
    <location>
        <begin position="13"/>
        <end position="153"/>
    </location>
</feature>
<feature type="short sequence motif" description="Nudix box">
    <location>
        <begin position="50"/>
        <end position="71"/>
    </location>
</feature>
<feature type="binding site" evidence="1">
    <location>
        <begin position="2"/>
        <end position="3"/>
    </location>
    <ligand>
        <name>substrate</name>
    </ligand>
</feature>
<feature type="binding site" evidence="1">
    <location>
        <position position="8"/>
    </location>
    <ligand>
        <name>substrate</name>
    </ligand>
</feature>
<feature type="binding site" evidence="1">
    <location>
        <position position="36"/>
    </location>
    <ligand>
        <name>substrate</name>
    </ligand>
</feature>
<feature type="binding site" evidence="1">
    <location>
        <position position="49"/>
    </location>
    <ligand>
        <name>Mg(2+)</name>
        <dbReference type="ChEBI" id="CHEBI:18420"/>
    </ligand>
</feature>
<feature type="binding site" evidence="1">
    <location>
        <position position="69"/>
    </location>
    <ligand>
        <name>Mg(2+)</name>
        <dbReference type="ChEBI" id="CHEBI:18420"/>
    </ligand>
</feature>
<feature type="binding site" evidence="1">
    <location>
        <position position="122"/>
    </location>
    <ligand>
        <name>Mg(2+)</name>
        <dbReference type="ChEBI" id="CHEBI:18420"/>
    </ligand>
</feature>
<dbReference type="EC" id="3.6.1.-" evidence="1"/>
<dbReference type="EMBL" id="AE005674">
    <property type="protein sequence ID" value="AAN43653.2"/>
    <property type="molecule type" value="Genomic_DNA"/>
</dbReference>
<dbReference type="EMBL" id="AE014073">
    <property type="protein sequence ID" value="AAP17482.1"/>
    <property type="molecule type" value="Genomic_DNA"/>
</dbReference>
<dbReference type="RefSeq" id="NP_707946.2">
    <property type="nucleotide sequence ID" value="NC_004337.2"/>
</dbReference>
<dbReference type="RefSeq" id="WP_000479838.1">
    <property type="nucleotide sequence ID" value="NZ_WPGW01000076.1"/>
</dbReference>
<dbReference type="SMR" id="P65553"/>
<dbReference type="STRING" id="198214.SF2114"/>
<dbReference type="PaxDb" id="198214-SF2114"/>
<dbReference type="GeneID" id="1025299"/>
<dbReference type="KEGG" id="sfl:SF2114"/>
<dbReference type="KEGG" id="sfx:S2237"/>
<dbReference type="PATRIC" id="fig|198214.7.peg.2522"/>
<dbReference type="HOGENOM" id="CLU_037162_12_0_6"/>
<dbReference type="Proteomes" id="UP000001006">
    <property type="component" value="Chromosome"/>
</dbReference>
<dbReference type="Proteomes" id="UP000002673">
    <property type="component" value="Chromosome"/>
</dbReference>
<dbReference type="GO" id="GO:0008727">
    <property type="term" value="F:GDP-mannose mannosyl hydrolase activity"/>
    <property type="evidence" value="ECO:0007669"/>
    <property type="project" value="UniProtKB-UniRule"/>
</dbReference>
<dbReference type="GO" id="GO:0000287">
    <property type="term" value="F:magnesium ion binding"/>
    <property type="evidence" value="ECO:0007669"/>
    <property type="project" value="UniProtKB-UniRule"/>
</dbReference>
<dbReference type="GO" id="GO:0030145">
    <property type="term" value="F:manganese ion binding"/>
    <property type="evidence" value="ECO:0007669"/>
    <property type="project" value="InterPro"/>
</dbReference>
<dbReference type="CDD" id="cd03430">
    <property type="entry name" value="NUDIX_GDPMH_NudD"/>
    <property type="match status" value="1"/>
</dbReference>
<dbReference type="FunFam" id="3.90.79.10:FF:000064">
    <property type="entry name" value="GDP-mannose mannosyl hydrolase"/>
    <property type="match status" value="1"/>
</dbReference>
<dbReference type="Gene3D" id="3.90.79.10">
    <property type="entry name" value="Nucleoside Triphosphate Pyrophosphohydrolase"/>
    <property type="match status" value="1"/>
</dbReference>
<dbReference type="HAMAP" id="MF_00941">
    <property type="entry name" value="GDPMH_gmm"/>
    <property type="match status" value="1"/>
</dbReference>
<dbReference type="InterPro" id="IPR033715">
    <property type="entry name" value="GDPMH"/>
</dbReference>
<dbReference type="InterPro" id="IPR028613">
    <property type="entry name" value="GDPMH_Gmm"/>
</dbReference>
<dbReference type="InterPro" id="IPR015797">
    <property type="entry name" value="NUDIX_hydrolase-like_dom_sf"/>
</dbReference>
<dbReference type="InterPro" id="IPR020084">
    <property type="entry name" value="NUDIX_hydrolase_CS"/>
</dbReference>
<dbReference type="InterPro" id="IPR000086">
    <property type="entry name" value="NUDIX_hydrolase_dom"/>
</dbReference>
<dbReference type="NCBIfam" id="NF011963">
    <property type="entry name" value="PRK15434.1"/>
    <property type="match status" value="1"/>
</dbReference>
<dbReference type="PANTHER" id="PTHR43046">
    <property type="entry name" value="GDP-MANNOSE MANNOSYL HYDROLASE"/>
    <property type="match status" value="1"/>
</dbReference>
<dbReference type="PANTHER" id="PTHR43046:SF12">
    <property type="entry name" value="GDP-MANNOSE MANNOSYL HYDROLASE"/>
    <property type="match status" value="1"/>
</dbReference>
<dbReference type="Pfam" id="PF00293">
    <property type="entry name" value="NUDIX"/>
    <property type="match status" value="1"/>
</dbReference>
<dbReference type="PIRSF" id="PIRSF037599">
    <property type="entry name" value="GDPMH"/>
    <property type="match status" value="1"/>
</dbReference>
<dbReference type="SUPFAM" id="SSF55811">
    <property type="entry name" value="Nudix"/>
    <property type="match status" value="1"/>
</dbReference>
<dbReference type="PROSITE" id="PS51462">
    <property type="entry name" value="NUDIX"/>
    <property type="match status" value="1"/>
</dbReference>
<dbReference type="PROSITE" id="PS00893">
    <property type="entry name" value="NUDIX_BOX"/>
    <property type="match status" value="1"/>
</dbReference>
<sequence>MFLRQEDFATVVRSTPLVSLDFIVENSRGEFLLGKRTNRPAQGYWFVPGGRVQKDETLEAAFERLTMAELGLRLPITAGQFYGVWQHFYDDNFSGTDFTTHYVVLGFRFRVAEEELLLPDEQHDDYRWLTPDALLASNDVHANSRAYFLAEKRAGVPGL</sequence>
<gene>
    <name evidence="1" type="primary">gmm</name>
    <name type="synonym">nudD</name>
    <name type="synonym">wcaH</name>
    <name type="ordered locus">SF2114</name>
    <name type="ordered locus">S2237</name>
</gene>
<name>GMM_SHIFL</name>
<proteinExistence type="inferred from homology"/>
<comment type="function">
    <text evidence="1">Hydrolyzes GDP-mannose.</text>
</comment>
<comment type="catalytic activity">
    <reaction evidence="1">
        <text>GDP-alpha-D-mannose + H2O = D-mannose + GDP + H(+)</text>
        <dbReference type="Rhea" id="RHEA:28102"/>
        <dbReference type="ChEBI" id="CHEBI:4208"/>
        <dbReference type="ChEBI" id="CHEBI:15377"/>
        <dbReference type="ChEBI" id="CHEBI:15378"/>
        <dbReference type="ChEBI" id="CHEBI:57527"/>
        <dbReference type="ChEBI" id="CHEBI:58189"/>
    </reaction>
</comment>
<comment type="cofactor">
    <cofactor evidence="1">
        <name>Mg(2+)</name>
        <dbReference type="ChEBI" id="CHEBI:18420"/>
    </cofactor>
    <text evidence="1">Binds 1 Mg(2+) ion per subunit.</text>
</comment>
<comment type="subunit">
    <text evidence="1">Homodimer.</text>
</comment>
<comment type="similarity">
    <text evidence="1">Belongs to the Nudix hydrolase family.</text>
</comment>
<organism>
    <name type="scientific">Shigella flexneri</name>
    <dbReference type="NCBI Taxonomy" id="623"/>
    <lineage>
        <taxon>Bacteria</taxon>
        <taxon>Pseudomonadati</taxon>
        <taxon>Pseudomonadota</taxon>
        <taxon>Gammaproteobacteria</taxon>
        <taxon>Enterobacterales</taxon>
        <taxon>Enterobacteriaceae</taxon>
        <taxon>Shigella</taxon>
    </lineage>
</organism>
<protein>
    <recommendedName>
        <fullName evidence="1">GDP-mannose mannosyl hydrolase</fullName>
        <shortName evidence="1">GDPMH</shortName>
        <ecNumber evidence="1">3.6.1.-</ecNumber>
    </recommendedName>
</protein>
<evidence type="ECO:0000255" key="1">
    <source>
        <dbReference type="HAMAP-Rule" id="MF_00941"/>
    </source>
</evidence>
<reference key="1">
    <citation type="journal article" date="2002" name="Nucleic Acids Res.">
        <title>Genome sequence of Shigella flexneri 2a: insights into pathogenicity through comparison with genomes of Escherichia coli K12 and O157.</title>
        <authorList>
            <person name="Jin Q."/>
            <person name="Yuan Z."/>
            <person name="Xu J."/>
            <person name="Wang Y."/>
            <person name="Shen Y."/>
            <person name="Lu W."/>
            <person name="Wang J."/>
            <person name="Liu H."/>
            <person name="Yang J."/>
            <person name="Yang F."/>
            <person name="Zhang X."/>
            <person name="Zhang J."/>
            <person name="Yang G."/>
            <person name="Wu H."/>
            <person name="Qu D."/>
            <person name="Dong J."/>
            <person name="Sun L."/>
            <person name="Xue Y."/>
            <person name="Zhao A."/>
            <person name="Gao Y."/>
            <person name="Zhu J."/>
            <person name="Kan B."/>
            <person name="Ding K."/>
            <person name="Chen S."/>
            <person name="Cheng H."/>
            <person name="Yao Z."/>
            <person name="He B."/>
            <person name="Chen R."/>
            <person name="Ma D."/>
            <person name="Qiang B."/>
            <person name="Wen Y."/>
            <person name="Hou Y."/>
            <person name="Yu J."/>
        </authorList>
    </citation>
    <scope>NUCLEOTIDE SEQUENCE [LARGE SCALE GENOMIC DNA]</scope>
    <source>
        <strain>301 / Serotype 2a</strain>
    </source>
</reference>
<reference key="2">
    <citation type="journal article" date="2003" name="Infect. Immun.">
        <title>Complete genome sequence and comparative genomics of Shigella flexneri serotype 2a strain 2457T.</title>
        <authorList>
            <person name="Wei J."/>
            <person name="Goldberg M.B."/>
            <person name="Burland V."/>
            <person name="Venkatesan M.M."/>
            <person name="Deng W."/>
            <person name="Fournier G."/>
            <person name="Mayhew G.F."/>
            <person name="Plunkett G. III"/>
            <person name="Rose D.J."/>
            <person name="Darling A."/>
            <person name="Mau B."/>
            <person name="Perna N.T."/>
            <person name="Payne S.M."/>
            <person name="Runyen-Janecky L.J."/>
            <person name="Zhou S."/>
            <person name="Schwartz D.C."/>
            <person name="Blattner F.R."/>
        </authorList>
    </citation>
    <scope>NUCLEOTIDE SEQUENCE [LARGE SCALE GENOMIC DNA]</scope>
    <source>
        <strain>ATCC 700930 / 2457T / Serotype 2a</strain>
    </source>
</reference>